<gene>
    <name evidence="1" type="primary">ureG</name>
    <name type="ordered locus">RPD_1364</name>
</gene>
<name>UREG_RHOPS</name>
<sequence length="210" mass="22476">MSTHHGPLRVGIGGPVGSGKTALMDLLCKSMRERYDIAAITNDIYTKWDAEFLVRSGSLTPDRIAGVETGGCPHTAIREDASMNLAAVAEMRSKFPGLDLVLIESGGDNLAATFSPELADLTIYVIDVSAGDKIPSKGGPGITRSDLLVINKIDLAPYVGASLDKMDADARRMRGERPFVMTNLKTREGLERILSFIETKGGLKPKADTA</sequence>
<feature type="chain" id="PRO_1000145217" description="Urease accessory protein UreG">
    <location>
        <begin position="1"/>
        <end position="210"/>
    </location>
</feature>
<feature type="binding site" evidence="1">
    <location>
        <begin position="14"/>
        <end position="21"/>
    </location>
    <ligand>
        <name>GTP</name>
        <dbReference type="ChEBI" id="CHEBI:37565"/>
    </ligand>
</feature>
<keyword id="KW-0143">Chaperone</keyword>
<keyword id="KW-0963">Cytoplasm</keyword>
<keyword id="KW-0342">GTP-binding</keyword>
<keyword id="KW-0996">Nickel insertion</keyword>
<keyword id="KW-0547">Nucleotide-binding</keyword>
<accession>Q13BD7</accession>
<reference key="1">
    <citation type="submission" date="2006-03" db="EMBL/GenBank/DDBJ databases">
        <title>Complete sequence of Rhodopseudomonas palustris BisB5.</title>
        <authorList>
            <consortium name="US DOE Joint Genome Institute"/>
            <person name="Copeland A."/>
            <person name="Lucas S."/>
            <person name="Lapidus A."/>
            <person name="Barry K."/>
            <person name="Detter J.C."/>
            <person name="Glavina del Rio T."/>
            <person name="Hammon N."/>
            <person name="Israni S."/>
            <person name="Dalin E."/>
            <person name="Tice H."/>
            <person name="Pitluck S."/>
            <person name="Chain P."/>
            <person name="Malfatti S."/>
            <person name="Shin M."/>
            <person name="Vergez L."/>
            <person name="Schmutz J."/>
            <person name="Larimer F."/>
            <person name="Land M."/>
            <person name="Hauser L."/>
            <person name="Pelletier D.A."/>
            <person name="Kyrpides N."/>
            <person name="Lykidis A."/>
            <person name="Oda Y."/>
            <person name="Harwood C.S."/>
            <person name="Richardson P."/>
        </authorList>
    </citation>
    <scope>NUCLEOTIDE SEQUENCE [LARGE SCALE GENOMIC DNA]</scope>
    <source>
        <strain>BisB5</strain>
    </source>
</reference>
<organism>
    <name type="scientific">Rhodopseudomonas palustris (strain BisB5)</name>
    <dbReference type="NCBI Taxonomy" id="316057"/>
    <lineage>
        <taxon>Bacteria</taxon>
        <taxon>Pseudomonadati</taxon>
        <taxon>Pseudomonadota</taxon>
        <taxon>Alphaproteobacteria</taxon>
        <taxon>Hyphomicrobiales</taxon>
        <taxon>Nitrobacteraceae</taxon>
        <taxon>Rhodopseudomonas</taxon>
    </lineage>
</organism>
<comment type="function">
    <text evidence="1">Facilitates the functional incorporation of the urease nickel metallocenter. This process requires GTP hydrolysis, probably effectuated by UreG.</text>
</comment>
<comment type="subunit">
    <text evidence="1">Homodimer. UreD, UreF and UreG form a complex that acts as a GTP-hydrolysis-dependent molecular chaperone, activating the urease apoprotein by helping to assemble the nickel containing metallocenter of UreC. The UreE protein probably delivers the nickel.</text>
</comment>
<comment type="subcellular location">
    <subcellularLocation>
        <location evidence="1">Cytoplasm</location>
    </subcellularLocation>
</comment>
<comment type="similarity">
    <text evidence="1">Belongs to the SIMIBI class G3E GTPase family. UreG subfamily.</text>
</comment>
<dbReference type="EMBL" id="CP000283">
    <property type="protein sequence ID" value="ABE38602.1"/>
    <property type="molecule type" value="Genomic_DNA"/>
</dbReference>
<dbReference type="SMR" id="Q13BD7"/>
<dbReference type="STRING" id="316057.RPD_1364"/>
<dbReference type="KEGG" id="rpd:RPD_1364"/>
<dbReference type="eggNOG" id="COG0378">
    <property type="taxonomic scope" value="Bacteria"/>
</dbReference>
<dbReference type="HOGENOM" id="CLU_072144_1_0_5"/>
<dbReference type="BioCyc" id="RPAL316057:RPD_RS06900-MONOMER"/>
<dbReference type="Proteomes" id="UP000001818">
    <property type="component" value="Chromosome"/>
</dbReference>
<dbReference type="GO" id="GO:0005737">
    <property type="term" value="C:cytoplasm"/>
    <property type="evidence" value="ECO:0007669"/>
    <property type="project" value="UniProtKB-SubCell"/>
</dbReference>
<dbReference type="GO" id="GO:0005525">
    <property type="term" value="F:GTP binding"/>
    <property type="evidence" value="ECO:0007669"/>
    <property type="project" value="UniProtKB-KW"/>
</dbReference>
<dbReference type="GO" id="GO:0003924">
    <property type="term" value="F:GTPase activity"/>
    <property type="evidence" value="ECO:0007669"/>
    <property type="project" value="InterPro"/>
</dbReference>
<dbReference type="GO" id="GO:0016151">
    <property type="term" value="F:nickel cation binding"/>
    <property type="evidence" value="ECO:0007669"/>
    <property type="project" value="UniProtKB-UniRule"/>
</dbReference>
<dbReference type="GO" id="GO:0043419">
    <property type="term" value="P:urea catabolic process"/>
    <property type="evidence" value="ECO:0007669"/>
    <property type="project" value="InterPro"/>
</dbReference>
<dbReference type="CDD" id="cd05540">
    <property type="entry name" value="UreG"/>
    <property type="match status" value="1"/>
</dbReference>
<dbReference type="FunFam" id="3.40.50.300:FF:000208">
    <property type="entry name" value="Urease accessory protein UreG"/>
    <property type="match status" value="1"/>
</dbReference>
<dbReference type="Gene3D" id="3.40.50.300">
    <property type="entry name" value="P-loop containing nucleotide triphosphate hydrolases"/>
    <property type="match status" value="1"/>
</dbReference>
<dbReference type="HAMAP" id="MF_01389">
    <property type="entry name" value="UreG"/>
    <property type="match status" value="1"/>
</dbReference>
<dbReference type="InterPro" id="IPR003495">
    <property type="entry name" value="CobW/HypB/UreG_nucleotide-bd"/>
</dbReference>
<dbReference type="InterPro" id="IPR027417">
    <property type="entry name" value="P-loop_NTPase"/>
</dbReference>
<dbReference type="InterPro" id="IPR004400">
    <property type="entry name" value="UreG"/>
</dbReference>
<dbReference type="NCBIfam" id="TIGR00101">
    <property type="entry name" value="ureG"/>
    <property type="match status" value="1"/>
</dbReference>
<dbReference type="PANTHER" id="PTHR31715">
    <property type="entry name" value="UREASE ACCESSORY PROTEIN G"/>
    <property type="match status" value="1"/>
</dbReference>
<dbReference type="PANTHER" id="PTHR31715:SF0">
    <property type="entry name" value="UREASE ACCESSORY PROTEIN G"/>
    <property type="match status" value="1"/>
</dbReference>
<dbReference type="Pfam" id="PF02492">
    <property type="entry name" value="cobW"/>
    <property type="match status" value="1"/>
</dbReference>
<dbReference type="PIRSF" id="PIRSF005624">
    <property type="entry name" value="Ni-bind_GTPase"/>
    <property type="match status" value="1"/>
</dbReference>
<dbReference type="SUPFAM" id="SSF52540">
    <property type="entry name" value="P-loop containing nucleoside triphosphate hydrolases"/>
    <property type="match status" value="1"/>
</dbReference>
<proteinExistence type="inferred from homology"/>
<protein>
    <recommendedName>
        <fullName evidence="1">Urease accessory protein UreG</fullName>
    </recommendedName>
</protein>
<evidence type="ECO:0000255" key="1">
    <source>
        <dbReference type="HAMAP-Rule" id="MF_01389"/>
    </source>
</evidence>